<sequence length="485" mass="53371">MLLLELKKTNQTLETIHFIGIGGVGMSGIAEILYNLGYKVQGSDLVENYNTKRLESYGIKIFLGHAEQNITNVSYVVISSAINPKNPEIKEALERKIPIIRRADMLAELMRLKCSVAVSGSHGKTTTTSLVACLFEAAGLCPTVINGGIINNKSTNAYLGSSNYLIAEADESDATFIHIPSTIAIITNIDPEHLDYYRDFETLIGAFRSFITNLPFYGFAVCCIDHKIVRKLVDDITERKIVTYGIDSEDAHIIAFNINTDIASSTFDVKISLPNVLGTTIIEKITIPTPGRHNILNSLAAIAVGIELDFGIKAIKNGFNNFKGVKRRFTKVAEYNNASIIDDYAHHPEEIKATLATAKNIANKQNGKVIAIFQPHRYSRMQYLFDDFMFCFADADILYITDIYAAGENPIEGITGRNLVDKITKRKHHDKANFLAELDDAVGVIIDNAASGDMIIMMGAGNISSFANELEGRLSSRGFSCHTVV</sequence>
<keyword id="KW-0067">ATP-binding</keyword>
<keyword id="KW-0131">Cell cycle</keyword>
<keyword id="KW-0132">Cell division</keyword>
<keyword id="KW-0133">Cell shape</keyword>
<keyword id="KW-0961">Cell wall biogenesis/degradation</keyword>
<keyword id="KW-0963">Cytoplasm</keyword>
<keyword id="KW-0436">Ligase</keyword>
<keyword id="KW-0547">Nucleotide-binding</keyword>
<keyword id="KW-0573">Peptidoglycan synthesis</keyword>
<comment type="function">
    <text evidence="1">Cell wall formation.</text>
</comment>
<comment type="catalytic activity">
    <reaction evidence="1">
        <text>UDP-N-acetyl-alpha-D-muramate + L-alanine + ATP = UDP-N-acetyl-alpha-D-muramoyl-L-alanine + ADP + phosphate + H(+)</text>
        <dbReference type="Rhea" id="RHEA:23372"/>
        <dbReference type="ChEBI" id="CHEBI:15378"/>
        <dbReference type="ChEBI" id="CHEBI:30616"/>
        <dbReference type="ChEBI" id="CHEBI:43474"/>
        <dbReference type="ChEBI" id="CHEBI:57972"/>
        <dbReference type="ChEBI" id="CHEBI:70757"/>
        <dbReference type="ChEBI" id="CHEBI:83898"/>
        <dbReference type="ChEBI" id="CHEBI:456216"/>
        <dbReference type="EC" id="6.3.2.8"/>
    </reaction>
</comment>
<comment type="pathway">
    <text evidence="1">Cell wall biogenesis; peptidoglycan biosynthesis.</text>
</comment>
<comment type="subcellular location">
    <subcellularLocation>
        <location evidence="1">Cytoplasm</location>
    </subcellularLocation>
</comment>
<comment type="similarity">
    <text evidence="1">Belongs to the MurCDEF family.</text>
</comment>
<reference key="1">
    <citation type="journal article" date="2009" name="BMC Genomics">
        <title>Analysis of the Rickettsia africae genome reveals that virulence acquisition in Rickettsia species may be explained by genome reduction.</title>
        <authorList>
            <person name="Fournier P.-E."/>
            <person name="El Karkouri K."/>
            <person name="Leroy Q."/>
            <person name="Robert C."/>
            <person name="Giumelli B."/>
            <person name="Renesto P."/>
            <person name="Socolovschi C."/>
            <person name="Parola P."/>
            <person name="Audic S."/>
            <person name="Raoult D."/>
        </authorList>
    </citation>
    <scope>NUCLEOTIDE SEQUENCE [LARGE SCALE GENOMIC DNA]</scope>
    <source>
        <strain>ESF-5</strain>
    </source>
</reference>
<name>MURC_RICAE</name>
<evidence type="ECO:0000255" key="1">
    <source>
        <dbReference type="HAMAP-Rule" id="MF_00046"/>
    </source>
</evidence>
<feature type="chain" id="PRO_1000202188" description="UDP-N-acetylmuramate--L-alanine ligase">
    <location>
        <begin position="1"/>
        <end position="485"/>
    </location>
</feature>
<feature type="binding site" evidence="1">
    <location>
        <begin position="120"/>
        <end position="126"/>
    </location>
    <ligand>
        <name>ATP</name>
        <dbReference type="ChEBI" id="CHEBI:30616"/>
    </ligand>
</feature>
<accession>C3PMU4</accession>
<proteinExistence type="inferred from homology"/>
<organism>
    <name type="scientific">Rickettsia africae (strain ESF-5)</name>
    <dbReference type="NCBI Taxonomy" id="347255"/>
    <lineage>
        <taxon>Bacteria</taxon>
        <taxon>Pseudomonadati</taxon>
        <taxon>Pseudomonadota</taxon>
        <taxon>Alphaproteobacteria</taxon>
        <taxon>Rickettsiales</taxon>
        <taxon>Rickettsiaceae</taxon>
        <taxon>Rickettsieae</taxon>
        <taxon>Rickettsia</taxon>
        <taxon>spotted fever group</taxon>
    </lineage>
</organism>
<dbReference type="EC" id="6.3.2.8" evidence="1"/>
<dbReference type="EMBL" id="CP001612">
    <property type="protein sequence ID" value="ACP53254.1"/>
    <property type="molecule type" value="Genomic_DNA"/>
</dbReference>
<dbReference type="RefSeq" id="WP_012719508.1">
    <property type="nucleotide sequence ID" value="NC_012633.1"/>
</dbReference>
<dbReference type="SMR" id="C3PMU4"/>
<dbReference type="KEGG" id="raf:RAF_ORF0308"/>
<dbReference type="HOGENOM" id="CLU_028104_2_2_5"/>
<dbReference type="UniPathway" id="UPA00219"/>
<dbReference type="Proteomes" id="UP000002305">
    <property type="component" value="Chromosome"/>
</dbReference>
<dbReference type="GO" id="GO:0005737">
    <property type="term" value="C:cytoplasm"/>
    <property type="evidence" value="ECO:0007669"/>
    <property type="project" value="UniProtKB-SubCell"/>
</dbReference>
<dbReference type="GO" id="GO:0005524">
    <property type="term" value="F:ATP binding"/>
    <property type="evidence" value="ECO:0007669"/>
    <property type="project" value="UniProtKB-UniRule"/>
</dbReference>
<dbReference type="GO" id="GO:0008763">
    <property type="term" value="F:UDP-N-acetylmuramate-L-alanine ligase activity"/>
    <property type="evidence" value="ECO:0007669"/>
    <property type="project" value="UniProtKB-UniRule"/>
</dbReference>
<dbReference type="GO" id="GO:0051301">
    <property type="term" value="P:cell division"/>
    <property type="evidence" value="ECO:0007669"/>
    <property type="project" value="UniProtKB-KW"/>
</dbReference>
<dbReference type="GO" id="GO:0071555">
    <property type="term" value="P:cell wall organization"/>
    <property type="evidence" value="ECO:0007669"/>
    <property type="project" value="UniProtKB-KW"/>
</dbReference>
<dbReference type="GO" id="GO:0009252">
    <property type="term" value="P:peptidoglycan biosynthetic process"/>
    <property type="evidence" value="ECO:0007669"/>
    <property type="project" value="UniProtKB-UniRule"/>
</dbReference>
<dbReference type="GO" id="GO:0008360">
    <property type="term" value="P:regulation of cell shape"/>
    <property type="evidence" value="ECO:0007669"/>
    <property type="project" value="UniProtKB-KW"/>
</dbReference>
<dbReference type="Gene3D" id="3.90.190.20">
    <property type="entry name" value="Mur ligase, C-terminal domain"/>
    <property type="match status" value="1"/>
</dbReference>
<dbReference type="Gene3D" id="3.40.1190.10">
    <property type="entry name" value="Mur-like, catalytic domain"/>
    <property type="match status" value="1"/>
</dbReference>
<dbReference type="Gene3D" id="3.40.50.720">
    <property type="entry name" value="NAD(P)-binding Rossmann-like Domain"/>
    <property type="match status" value="1"/>
</dbReference>
<dbReference type="HAMAP" id="MF_00046">
    <property type="entry name" value="MurC"/>
    <property type="match status" value="1"/>
</dbReference>
<dbReference type="InterPro" id="IPR036565">
    <property type="entry name" value="Mur-like_cat_sf"/>
</dbReference>
<dbReference type="InterPro" id="IPR004101">
    <property type="entry name" value="Mur_ligase_C"/>
</dbReference>
<dbReference type="InterPro" id="IPR036615">
    <property type="entry name" value="Mur_ligase_C_dom_sf"/>
</dbReference>
<dbReference type="InterPro" id="IPR013221">
    <property type="entry name" value="Mur_ligase_cen"/>
</dbReference>
<dbReference type="InterPro" id="IPR000713">
    <property type="entry name" value="Mur_ligase_N"/>
</dbReference>
<dbReference type="InterPro" id="IPR050061">
    <property type="entry name" value="MurCDEF_pg_biosynth"/>
</dbReference>
<dbReference type="InterPro" id="IPR005758">
    <property type="entry name" value="UDP-N-AcMur_Ala_ligase_MurC"/>
</dbReference>
<dbReference type="NCBIfam" id="TIGR01082">
    <property type="entry name" value="murC"/>
    <property type="match status" value="1"/>
</dbReference>
<dbReference type="PANTHER" id="PTHR43445:SF3">
    <property type="entry name" value="UDP-N-ACETYLMURAMATE--L-ALANINE LIGASE"/>
    <property type="match status" value="1"/>
</dbReference>
<dbReference type="PANTHER" id="PTHR43445">
    <property type="entry name" value="UDP-N-ACETYLMURAMATE--L-ALANINE LIGASE-RELATED"/>
    <property type="match status" value="1"/>
</dbReference>
<dbReference type="Pfam" id="PF01225">
    <property type="entry name" value="Mur_ligase"/>
    <property type="match status" value="1"/>
</dbReference>
<dbReference type="Pfam" id="PF02875">
    <property type="entry name" value="Mur_ligase_C"/>
    <property type="match status" value="1"/>
</dbReference>
<dbReference type="Pfam" id="PF08245">
    <property type="entry name" value="Mur_ligase_M"/>
    <property type="match status" value="1"/>
</dbReference>
<dbReference type="SUPFAM" id="SSF51984">
    <property type="entry name" value="MurCD N-terminal domain"/>
    <property type="match status" value="1"/>
</dbReference>
<dbReference type="SUPFAM" id="SSF53623">
    <property type="entry name" value="MurD-like peptide ligases, catalytic domain"/>
    <property type="match status" value="1"/>
</dbReference>
<dbReference type="SUPFAM" id="SSF53244">
    <property type="entry name" value="MurD-like peptide ligases, peptide-binding domain"/>
    <property type="match status" value="1"/>
</dbReference>
<gene>
    <name evidence="1" type="primary">murC</name>
    <name type="ordered locus">RAF_ORF0308</name>
</gene>
<protein>
    <recommendedName>
        <fullName evidence="1">UDP-N-acetylmuramate--L-alanine ligase</fullName>
        <ecNumber evidence="1">6.3.2.8</ecNumber>
    </recommendedName>
    <alternativeName>
        <fullName evidence="1">UDP-N-acetylmuramoyl-L-alanine synthetase</fullName>
    </alternativeName>
</protein>